<organism>
    <name type="scientific">Arabidopsis thaliana</name>
    <name type="common">Mouse-ear cress</name>
    <dbReference type="NCBI Taxonomy" id="3702"/>
    <lineage>
        <taxon>Eukaryota</taxon>
        <taxon>Viridiplantae</taxon>
        <taxon>Streptophyta</taxon>
        <taxon>Embryophyta</taxon>
        <taxon>Tracheophyta</taxon>
        <taxon>Spermatophyta</taxon>
        <taxon>Magnoliopsida</taxon>
        <taxon>eudicotyledons</taxon>
        <taxon>Gunneridae</taxon>
        <taxon>Pentapetalae</taxon>
        <taxon>rosids</taxon>
        <taxon>malvids</taxon>
        <taxon>Brassicales</taxon>
        <taxon>Brassicaceae</taxon>
        <taxon>Camelineae</taxon>
        <taxon>Arabidopsis</taxon>
    </lineage>
</organism>
<keyword id="KW-0067">ATP-binding</keyword>
<keyword id="KW-0104">Cadmium</keyword>
<keyword id="KW-0150">Chloroplast</keyword>
<keyword id="KW-0460">Magnesium</keyword>
<keyword id="KW-0472">Membrane</keyword>
<keyword id="KW-0479">Metal-binding</keyword>
<keyword id="KW-0547">Nucleotide-binding</keyword>
<keyword id="KW-0934">Plastid</keyword>
<keyword id="KW-1001">Plastid inner membrane</keyword>
<keyword id="KW-1185">Reference proteome</keyword>
<keyword id="KW-0809">Transit peptide</keyword>
<keyword id="KW-1278">Translocase</keyword>
<keyword id="KW-0812">Transmembrane</keyword>
<keyword id="KW-1133">Transmembrane helix</keyword>
<keyword id="KW-0862">Zinc</keyword>
<feature type="transit peptide" description="Chloroplast" evidence="2">
    <location>
        <begin position="1"/>
        <end position="17"/>
    </location>
</feature>
<feature type="chain" id="PRO_0000046398" description="Probable cadmium/zinc-transporting ATPase HMA1, chloroplastic">
    <location>
        <begin position="18"/>
        <end position="819"/>
    </location>
</feature>
<feature type="topological domain" description="Stromal" evidence="2">
    <location>
        <begin position="18"/>
        <end position="122"/>
    </location>
</feature>
<feature type="transmembrane region" description="Helical" evidence="2">
    <location>
        <begin position="123"/>
        <end position="144"/>
    </location>
</feature>
<feature type="topological domain" description="Lumenal" evidence="2">
    <location>
        <begin position="145"/>
        <end position="153"/>
    </location>
</feature>
<feature type="transmembrane region" description="Helical" evidence="2">
    <location>
        <begin position="154"/>
        <end position="173"/>
    </location>
</feature>
<feature type="topological domain" description="Stromal" evidence="2">
    <location>
        <begin position="174"/>
        <end position="180"/>
    </location>
</feature>
<feature type="transmembrane region" description="Helical" evidence="2">
    <location>
        <begin position="181"/>
        <end position="201"/>
    </location>
</feature>
<feature type="topological domain" description="Lumenal" evidence="2">
    <location>
        <position position="202"/>
    </location>
</feature>
<feature type="transmembrane region" description="Helical" evidence="2">
    <location>
        <begin position="203"/>
        <end position="223"/>
    </location>
</feature>
<feature type="topological domain" description="Stromal" evidence="2">
    <location>
        <begin position="224"/>
        <end position="361"/>
    </location>
</feature>
<feature type="transmembrane region" description="Helical" evidence="2">
    <location>
        <begin position="362"/>
        <end position="384"/>
    </location>
</feature>
<feature type="topological domain" description="Lumenal" evidence="2">
    <location>
        <begin position="385"/>
        <end position="398"/>
    </location>
</feature>
<feature type="transmembrane region" description="Helical" evidence="2">
    <location>
        <begin position="399"/>
        <end position="416"/>
    </location>
</feature>
<feature type="topological domain" description="Stromal" evidence="2">
    <location>
        <begin position="417"/>
        <end position="737"/>
    </location>
</feature>
<feature type="transmembrane region" description="Helical" evidence="2">
    <location>
        <begin position="738"/>
        <end position="757"/>
    </location>
</feature>
<feature type="topological domain" description="Lumenal" evidence="2">
    <location>
        <begin position="758"/>
        <end position="762"/>
    </location>
</feature>
<feature type="transmembrane region" description="Helical" evidence="2">
    <location>
        <begin position="763"/>
        <end position="781"/>
    </location>
</feature>
<feature type="topological domain" description="Stromal" evidence="2">
    <location>
        <begin position="782"/>
        <end position="819"/>
    </location>
</feature>
<feature type="region of interest" description="Disordered" evidence="3">
    <location>
        <begin position="66"/>
        <end position="87"/>
    </location>
</feature>
<feature type="compositionally biased region" description="Basic and acidic residues" evidence="3">
    <location>
        <begin position="66"/>
        <end position="79"/>
    </location>
</feature>
<feature type="active site" description="4-aspartylphosphate intermediate" evidence="1">
    <location>
        <position position="453"/>
    </location>
</feature>
<feature type="binding site" evidence="1">
    <location>
        <position position="682"/>
    </location>
    <ligand>
        <name>Mg(2+)</name>
        <dbReference type="ChEBI" id="CHEBI:18420"/>
    </ligand>
</feature>
<feature type="binding site" evidence="1">
    <location>
        <position position="686"/>
    </location>
    <ligand>
        <name>Mg(2+)</name>
        <dbReference type="ChEBI" id="CHEBI:18420"/>
    </ligand>
</feature>
<feature type="sequence variant" description="In strain: cv. Landsberg erecta.">
    <original>N</original>
    <variation>S</variation>
    <location>
        <position position="53"/>
    </location>
</feature>
<feature type="sequence variant" description="In strain: cv. Landsberg erecta.">
    <original>M</original>
    <variation>V</variation>
    <location>
        <position position="105"/>
    </location>
</feature>
<feature type="sequence variant" description="In strain: cv. Landsberg erecta.">
    <original>P</original>
    <variation>S</variation>
    <location>
        <position position="659"/>
    </location>
</feature>
<protein>
    <recommendedName>
        <fullName>Probable cadmium/zinc-transporting ATPase HMA1, chloroplastic</fullName>
        <ecNumber>7.2.2.12</ecNumber>
        <ecNumber>7.2.2.21</ecNumber>
    </recommendedName>
    <alternativeName>
        <fullName>Protein HEAVY METAL ATPASE 1</fullName>
    </alternativeName>
</protein>
<gene>
    <name type="primary">HMA1</name>
    <name type="ordered locus">At4g37270</name>
    <name type="ORF">AP22.4</name>
    <name type="ORF">C7A10.90</name>
</gene>
<proteinExistence type="evidence at transcript level"/>
<evidence type="ECO:0000250" key="1"/>
<evidence type="ECO:0000255" key="2"/>
<evidence type="ECO:0000256" key="3">
    <source>
        <dbReference type="SAM" id="MobiDB-lite"/>
    </source>
</evidence>
<evidence type="ECO:0000305" key="4"/>
<dbReference type="EC" id="7.2.2.12"/>
<dbReference type="EC" id="7.2.2.21"/>
<dbReference type="EMBL" id="AJ400906">
    <property type="protein sequence ID" value="CAB90352.1"/>
    <property type="molecule type" value="mRNA"/>
</dbReference>
<dbReference type="EMBL" id="AJ872069">
    <property type="protein sequence ID" value="CAI43274.1"/>
    <property type="molecule type" value="mRNA"/>
</dbReference>
<dbReference type="EMBL" id="Z99707">
    <property type="protein sequence ID" value="CAB16773.1"/>
    <property type="molecule type" value="Genomic_DNA"/>
</dbReference>
<dbReference type="EMBL" id="AL161591">
    <property type="protein sequence ID" value="CAB80393.1"/>
    <property type="molecule type" value="Genomic_DNA"/>
</dbReference>
<dbReference type="EMBL" id="CP002687">
    <property type="protein sequence ID" value="AEE86775.1"/>
    <property type="molecule type" value="Genomic_DNA"/>
</dbReference>
<dbReference type="PIR" id="D85440">
    <property type="entry name" value="D85440"/>
</dbReference>
<dbReference type="RefSeq" id="NP_195444.1">
    <property type="nucleotide sequence ID" value="NM_119890.7"/>
</dbReference>
<dbReference type="SMR" id="Q9M3H5"/>
<dbReference type="FunCoup" id="Q9M3H5">
    <property type="interactions" value="1034"/>
</dbReference>
<dbReference type="STRING" id="3702.Q9M3H5"/>
<dbReference type="TCDB" id="3.A.3.6.6">
    <property type="family name" value="the p-type atpase (p-atpase) superfamily"/>
</dbReference>
<dbReference type="PaxDb" id="3702-AT4G37270.1"/>
<dbReference type="ProteomicsDB" id="230358"/>
<dbReference type="EnsemblPlants" id="AT4G37270.1">
    <property type="protein sequence ID" value="AT4G37270.1"/>
    <property type="gene ID" value="AT4G37270"/>
</dbReference>
<dbReference type="GeneID" id="829881"/>
<dbReference type="Gramene" id="AT4G37270.1">
    <property type="protein sequence ID" value="AT4G37270.1"/>
    <property type="gene ID" value="AT4G37270"/>
</dbReference>
<dbReference type="KEGG" id="ath:AT4G37270"/>
<dbReference type="Araport" id="AT4G37270"/>
<dbReference type="TAIR" id="AT4G37270">
    <property type="gene designation" value="HMA1"/>
</dbReference>
<dbReference type="eggNOG" id="KOG0207">
    <property type="taxonomic scope" value="Eukaryota"/>
</dbReference>
<dbReference type="HOGENOM" id="CLU_001771_6_3_1"/>
<dbReference type="InParanoid" id="Q9M3H5"/>
<dbReference type="OMA" id="HLHLMET"/>
<dbReference type="PhylomeDB" id="Q9M3H5"/>
<dbReference type="BioCyc" id="ARA:AT4G37270-MONOMER"/>
<dbReference type="PRO" id="PR:Q9M3H5"/>
<dbReference type="Proteomes" id="UP000006548">
    <property type="component" value="Chromosome 4"/>
</dbReference>
<dbReference type="ExpressionAtlas" id="Q9M3H5">
    <property type="expression patterns" value="baseline and differential"/>
</dbReference>
<dbReference type="GO" id="GO:0009507">
    <property type="term" value="C:chloroplast"/>
    <property type="evidence" value="ECO:0007005"/>
    <property type="project" value="TAIR"/>
</dbReference>
<dbReference type="GO" id="GO:0009941">
    <property type="term" value="C:chloroplast envelope"/>
    <property type="evidence" value="ECO:0000314"/>
    <property type="project" value="TAIR"/>
</dbReference>
<dbReference type="GO" id="GO:0009706">
    <property type="term" value="C:chloroplast inner membrane"/>
    <property type="evidence" value="ECO:0007669"/>
    <property type="project" value="UniProtKB-SubCell"/>
</dbReference>
<dbReference type="GO" id="GO:0005886">
    <property type="term" value="C:plasma membrane"/>
    <property type="evidence" value="ECO:0007005"/>
    <property type="project" value="TAIR"/>
</dbReference>
<dbReference type="GO" id="GO:0009536">
    <property type="term" value="C:plastid"/>
    <property type="evidence" value="ECO:0007005"/>
    <property type="project" value="TAIR"/>
</dbReference>
<dbReference type="GO" id="GO:0005524">
    <property type="term" value="F:ATP binding"/>
    <property type="evidence" value="ECO:0007669"/>
    <property type="project" value="UniProtKB-KW"/>
</dbReference>
<dbReference type="GO" id="GO:0016887">
    <property type="term" value="F:ATP hydrolysis activity"/>
    <property type="evidence" value="ECO:0000315"/>
    <property type="project" value="TAIR"/>
</dbReference>
<dbReference type="GO" id="GO:0046872">
    <property type="term" value="F:metal ion binding"/>
    <property type="evidence" value="ECO:0007669"/>
    <property type="project" value="UniProtKB-KW"/>
</dbReference>
<dbReference type="GO" id="GO:0008551">
    <property type="term" value="F:P-type cadmium transporter activity"/>
    <property type="evidence" value="ECO:0007669"/>
    <property type="project" value="UniProtKB-EC"/>
</dbReference>
<dbReference type="GO" id="GO:0016463">
    <property type="term" value="F:P-type zinc transporter activity"/>
    <property type="evidence" value="ECO:0000314"/>
    <property type="project" value="TAIR"/>
</dbReference>
<dbReference type="GO" id="GO:0006878">
    <property type="term" value="P:intracellular copper ion homeostasis"/>
    <property type="evidence" value="ECO:0000315"/>
    <property type="project" value="TAIR"/>
</dbReference>
<dbReference type="GO" id="GO:0009642">
    <property type="term" value="P:response to light intensity"/>
    <property type="evidence" value="ECO:0000315"/>
    <property type="project" value="TAIR"/>
</dbReference>
<dbReference type="CDD" id="cd02079">
    <property type="entry name" value="P-type_ATPase_HM"/>
    <property type="match status" value="1"/>
</dbReference>
<dbReference type="Gene3D" id="3.40.1110.10">
    <property type="entry name" value="Calcium-transporting ATPase, cytoplasmic domain N"/>
    <property type="match status" value="1"/>
</dbReference>
<dbReference type="Gene3D" id="2.70.150.10">
    <property type="entry name" value="Calcium-transporting ATPase, cytoplasmic transduction domain A"/>
    <property type="match status" value="1"/>
</dbReference>
<dbReference type="Gene3D" id="3.40.50.1000">
    <property type="entry name" value="HAD superfamily/HAD-like"/>
    <property type="match status" value="1"/>
</dbReference>
<dbReference type="InterPro" id="IPR023299">
    <property type="entry name" value="ATPase_P-typ_cyto_dom_N"/>
</dbReference>
<dbReference type="InterPro" id="IPR018303">
    <property type="entry name" value="ATPase_P-typ_P_site"/>
</dbReference>
<dbReference type="InterPro" id="IPR023298">
    <property type="entry name" value="ATPase_P-typ_TM_dom_sf"/>
</dbReference>
<dbReference type="InterPro" id="IPR008250">
    <property type="entry name" value="ATPase_P-typ_transduc_dom_A_sf"/>
</dbReference>
<dbReference type="InterPro" id="IPR051949">
    <property type="entry name" value="Cation_Transport_ATPase"/>
</dbReference>
<dbReference type="InterPro" id="IPR036412">
    <property type="entry name" value="HAD-like_sf"/>
</dbReference>
<dbReference type="InterPro" id="IPR023214">
    <property type="entry name" value="HAD_sf"/>
</dbReference>
<dbReference type="InterPro" id="IPR027256">
    <property type="entry name" value="P-typ_ATPase_IB"/>
</dbReference>
<dbReference type="InterPro" id="IPR001757">
    <property type="entry name" value="P_typ_ATPase"/>
</dbReference>
<dbReference type="InterPro" id="IPR044492">
    <property type="entry name" value="P_typ_ATPase_HD_dom"/>
</dbReference>
<dbReference type="NCBIfam" id="TIGR01525">
    <property type="entry name" value="ATPase-IB_hvy"/>
    <property type="match status" value="1"/>
</dbReference>
<dbReference type="NCBIfam" id="TIGR01494">
    <property type="entry name" value="ATPase_P-type"/>
    <property type="match status" value="2"/>
</dbReference>
<dbReference type="PANTHER" id="PTHR43079:SF1">
    <property type="entry name" value="CADMIUM_ZINC-TRANSPORTING ATPASE HMA1, CHLOROPLASTIC-RELATED"/>
    <property type="match status" value="1"/>
</dbReference>
<dbReference type="PANTHER" id="PTHR43079">
    <property type="entry name" value="PROBABLE CADMIUM/ZINC-TRANSPORTING ATPASE HMA1"/>
    <property type="match status" value="1"/>
</dbReference>
<dbReference type="Pfam" id="PF00122">
    <property type="entry name" value="E1-E2_ATPase"/>
    <property type="match status" value="1"/>
</dbReference>
<dbReference type="Pfam" id="PF00702">
    <property type="entry name" value="Hydrolase"/>
    <property type="match status" value="1"/>
</dbReference>
<dbReference type="PRINTS" id="PR00119">
    <property type="entry name" value="CATATPASE"/>
</dbReference>
<dbReference type="SFLD" id="SFLDS00003">
    <property type="entry name" value="Haloacid_Dehalogenase"/>
    <property type="match status" value="1"/>
</dbReference>
<dbReference type="SFLD" id="SFLDF00027">
    <property type="entry name" value="p-type_atpase"/>
    <property type="match status" value="1"/>
</dbReference>
<dbReference type="SUPFAM" id="SSF81653">
    <property type="entry name" value="Calcium ATPase, transduction domain A"/>
    <property type="match status" value="1"/>
</dbReference>
<dbReference type="SUPFAM" id="SSF81665">
    <property type="entry name" value="Calcium ATPase, transmembrane domain M"/>
    <property type="match status" value="1"/>
</dbReference>
<dbReference type="SUPFAM" id="SSF56784">
    <property type="entry name" value="HAD-like"/>
    <property type="match status" value="1"/>
</dbReference>
<dbReference type="PROSITE" id="PS00154">
    <property type="entry name" value="ATPASE_E1_E2"/>
    <property type="match status" value="1"/>
</dbReference>
<accession>Q9M3H5</accession>
<accession>Q5JZZ1</accession>
<accession>Q9SW66</accession>
<reference key="1">
    <citation type="submission" date="2000-05" db="EMBL/GenBank/DDBJ databases">
        <title>Identification of a putative heavy metal P-type ATPase in Arabidopsis.</title>
        <authorList>
            <person name="Page S.L."/>
            <person name="Pittman J.K."/>
            <person name="Krijger G.C."/>
            <person name="Williams L.E."/>
        </authorList>
    </citation>
    <scope>NUCLEOTIDE SEQUENCE [MRNA]</scope>
    <source>
        <strain>cv. Landsberg erecta</strain>
    </source>
</reference>
<reference key="2">
    <citation type="submission" date="2005-01" db="EMBL/GenBank/DDBJ databases">
        <title>Functional characterization of AtHMA1.</title>
        <authorList>
            <person name="Mills R.F."/>
            <person name="Williams L.E."/>
        </authorList>
    </citation>
    <scope>NUCLEOTIDE SEQUENCE [MRNA]</scope>
    <source>
        <strain>cv. Columbia</strain>
        <tissue>Leaf</tissue>
        <tissue>Root</tissue>
    </source>
</reference>
<reference key="3">
    <citation type="journal article" date="1998" name="Nature">
        <title>Analysis of 1.9 Mb of contiguous sequence from chromosome 4 of Arabidopsis thaliana.</title>
        <authorList>
            <person name="Bevan M."/>
            <person name="Bancroft I."/>
            <person name="Bent E."/>
            <person name="Love K."/>
            <person name="Goodman H.M."/>
            <person name="Dean C."/>
            <person name="Bergkamp R."/>
            <person name="Dirkse W."/>
            <person name="van Staveren M."/>
            <person name="Stiekema W."/>
            <person name="Drost L."/>
            <person name="Ridley P."/>
            <person name="Hudson S.-A."/>
            <person name="Patel K."/>
            <person name="Murphy G."/>
            <person name="Piffanelli P."/>
            <person name="Wedler H."/>
            <person name="Wedler E."/>
            <person name="Wambutt R."/>
            <person name="Weitzenegger T."/>
            <person name="Pohl T."/>
            <person name="Terryn N."/>
            <person name="Gielen J."/>
            <person name="Villarroel R."/>
            <person name="De Clercq R."/>
            <person name="van Montagu M."/>
            <person name="Lecharny A."/>
            <person name="Aubourg S."/>
            <person name="Gy I."/>
            <person name="Kreis M."/>
            <person name="Lao N."/>
            <person name="Kavanagh T."/>
            <person name="Hempel S."/>
            <person name="Kotter P."/>
            <person name="Entian K.-D."/>
            <person name="Rieger M."/>
            <person name="Schaefer M."/>
            <person name="Funk B."/>
            <person name="Mueller-Auer S."/>
            <person name="Silvey M."/>
            <person name="James R."/>
            <person name="Monfort A."/>
            <person name="Pons A."/>
            <person name="Puigdomenech P."/>
            <person name="Douka A."/>
            <person name="Voukelatou E."/>
            <person name="Milioni D."/>
            <person name="Hatzopoulos P."/>
            <person name="Piravandi E."/>
            <person name="Obermaier B."/>
            <person name="Hilbert H."/>
            <person name="Duesterhoeft A."/>
            <person name="Moores T."/>
            <person name="Jones J.D.G."/>
            <person name="Eneva T."/>
            <person name="Palme K."/>
            <person name="Benes V."/>
            <person name="Rechmann S."/>
            <person name="Ansorge W."/>
            <person name="Cooke R."/>
            <person name="Berger C."/>
            <person name="Delseny M."/>
            <person name="Voet M."/>
            <person name="Volckaert G."/>
            <person name="Mewes H.-W."/>
            <person name="Klosterman S."/>
            <person name="Schueller C."/>
            <person name="Chalwatzis N."/>
        </authorList>
    </citation>
    <scope>NUCLEOTIDE SEQUENCE [LARGE SCALE GENOMIC DNA]</scope>
    <source>
        <strain>cv. Columbia</strain>
    </source>
</reference>
<reference key="4">
    <citation type="journal article" date="1999" name="Nature">
        <title>Sequence and analysis of chromosome 4 of the plant Arabidopsis thaliana.</title>
        <authorList>
            <person name="Mayer K.F.X."/>
            <person name="Schueller C."/>
            <person name="Wambutt R."/>
            <person name="Murphy G."/>
            <person name="Volckaert G."/>
            <person name="Pohl T."/>
            <person name="Duesterhoeft A."/>
            <person name="Stiekema W."/>
            <person name="Entian K.-D."/>
            <person name="Terryn N."/>
            <person name="Harris B."/>
            <person name="Ansorge W."/>
            <person name="Brandt P."/>
            <person name="Grivell L.A."/>
            <person name="Rieger M."/>
            <person name="Weichselgartner M."/>
            <person name="de Simone V."/>
            <person name="Obermaier B."/>
            <person name="Mache R."/>
            <person name="Mueller M."/>
            <person name="Kreis M."/>
            <person name="Delseny M."/>
            <person name="Puigdomenech P."/>
            <person name="Watson M."/>
            <person name="Schmidtheini T."/>
            <person name="Reichert B."/>
            <person name="Portetelle D."/>
            <person name="Perez-Alonso M."/>
            <person name="Boutry M."/>
            <person name="Bancroft I."/>
            <person name="Vos P."/>
            <person name="Hoheisel J."/>
            <person name="Zimmermann W."/>
            <person name="Wedler H."/>
            <person name="Ridley P."/>
            <person name="Langham S.-A."/>
            <person name="McCullagh B."/>
            <person name="Bilham L."/>
            <person name="Robben J."/>
            <person name="van der Schueren J."/>
            <person name="Grymonprez B."/>
            <person name="Chuang Y.-J."/>
            <person name="Vandenbussche F."/>
            <person name="Braeken M."/>
            <person name="Weltjens I."/>
            <person name="Voet M."/>
            <person name="Bastiaens I."/>
            <person name="Aert R."/>
            <person name="Defoor E."/>
            <person name="Weitzenegger T."/>
            <person name="Bothe G."/>
            <person name="Ramsperger U."/>
            <person name="Hilbert H."/>
            <person name="Braun M."/>
            <person name="Holzer E."/>
            <person name="Brandt A."/>
            <person name="Peters S."/>
            <person name="van Staveren M."/>
            <person name="Dirkse W."/>
            <person name="Mooijman P."/>
            <person name="Klein Lankhorst R."/>
            <person name="Rose M."/>
            <person name="Hauf J."/>
            <person name="Koetter P."/>
            <person name="Berneiser S."/>
            <person name="Hempel S."/>
            <person name="Feldpausch M."/>
            <person name="Lamberth S."/>
            <person name="Van den Daele H."/>
            <person name="De Keyser A."/>
            <person name="Buysshaert C."/>
            <person name="Gielen J."/>
            <person name="Villarroel R."/>
            <person name="De Clercq R."/>
            <person name="van Montagu M."/>
            <person name="Rogers J."/>
            <person name="Cronin A."/>
            <person name="Quail M.A."/>
            <person name="Bray-Allen S."/>
            <person name="Clark L."/>
            <person name="Doggett J."/>
            <person name="Hall S."/>
            <person name="Kay M."/>
            <person name="Lennard N."/>
            <person name="McLay K."/>
            <person name="Mayes R."/>
            <person name="Pettett A."/>
            <person name="Rajandream M.A."/>
            <person name="Lyne M."/>
            <person name="Benes V."/>
            <person name="Rechmann S."/>
            <person name="Borkova D."/>
            <person name="Bloecker H."/>
            <person name="Scharfe M."/>
            <person name="Grimm M."/>
            <person name="Loehnert T.-H."/>
            <person name="Dose S."/>
            <person name="de Haan M."/>
            <person name="Maarse A.C."/>
            <person name="Schaefer M."/>
            <person name="Mueller-Auer S."/>
            <person name="Gabel C."/>
            <person name="Fuchs M."/>
            <person name="Fartmann B."/>
            <person name="Granderath K."/>
            <person name="Dauner D."/>
            <person name="Herzl A."/>
            <person name="Neumann S."/>
            <person name="Argiriou A."/>
            <person name="Vitale D."/>
            <person name="Liguori R."/>
            <person name="Piravandi E."/>
            <person name="Massenet O."/>
            <person name="Quigley F."/>
            <person name="Clabauld G."/>
            <person name="Muendlein A."/>
            <person name="Felber R."/>
            <person name="Schnabl S."/>
            <person name="Hiller R."/>
            <person name="Schmidt W."/>
            <person name="Lecharny A."/>
            <person name="Aubourg S."/>
            <person name="Chefdor F."/>
            <person name="Cooke R."/>
            <person name="Berger C."/>
            <person name="Monfort A."/>
            <person name="Casacuberta E."/>
            <person name="Gibbons T."/>
            <person name="Weber N."/>
            <person name="Vandenbol M."/>
            <person name="Bargues M."/>
            <person name="Terol J."/>
            <person name="Torres A."/>
            <person name="Perez-Perez A."/>
            <person name="Purnelle B."/>
            <person name="Bent E."/>
            <person name="Johnson S."/>
            <person name="Tacon D."/>
            <person name="Jesse T."/>
            <person name="Heijnen L."/>
            <person name="Schwarz S."/>
            <person name="Scholler P."/>
            <person name="Heber S."/>
            <person name="Francs P."/>
            <person name="Bielke C."/>
            <person name="Frishman D."/>
            <person name="Haase D."/>
            <person name="Lemcke K."/>
            <person name="Mewes H.-W."/>
            <person name="Stocker S."/>
            <person name="Zaccaria P."/>
            <person name="Bevan M."/>
            <person name="Wilson R.K."/>
            <person name="de la Bastide M."/>
            <person name="Habermann K."/>
            <person name="Parnell L."/>
            <person name="Dedhia N."/>
            <person name="Gnoj L."/>
            <person name="Schutz K."/>
            <person name="Huang E."/>
            <person name="Spiegel L."/>
            <person name="Sekhon M."/>
            <person name="Murray J."/>
            <person name="Sheet P."/>
            <person name="Cordes M."/>
            <person name="Abu-Threideh J."/>
            <person name="Stoneking T."/>
            <person name="Kalicki J."/>
            <person name="Graves T."/>
            <person name="Harmon G."/>
            <person name="Edwards J."/>
            <person name="Latreille P."/>
            <person name="Courtney L."/>
            <person name="Cloud J."/>
            <person name="Abbott A."/>
            <person name="Scott K."/>
            <person name="Johnson D."/>
            <person name="Minx P."/>
            <person name="Bentley D."/>
            <person name="Fulton B."/>
            <person name="Miller N."/>
            <person name="Greco T."/>
            <person name="Kemp K."/>
            <person name="Kramer J."/>
            <person name="Fulton L."/>
            <person name="Mardis E."/>
            <person name="Dante M."/>
            <person name="Pepin K."/>
            <person name="Hillier L.W."/>
            <person name="Nelson J."/>
            <person name="Spieth J."/>
            <person name="Ryan E."/>
            <person name="Andrews S."/>
            <person name="Geisel C."/>
            <person name="Layman D."/>
            <person name="Du H."/>
            <person name="Ali J."/>
            <person name="Berghoff A."/>
            <person name="Jones K."/>
            <person name="Drone K."/>
            <person name="Cotton M."/>
            <person name="Joshu C."/>
            <person name="Antonoiu B."/>
            <person name="Zidanic M."/>
            <person name="Strong C."/>
            <person name="Sun H."/>
            <person name="Lamar B."/>
            <person name="Yordan C."/>
            <person name="Ma P."/>
            <person name="Zhong J."/>
            <person name="Preston R."/>
            <person name="Vil D."/>
            <person name="Shekher M."/>
            <person name="Matero A."/>
            <person name="Shah R."/>
            <person name="Swaby I.K."/>
            <person name="O'Shaughnessy A."/>
            <person name="Rodriguez M."/>
            <person name="Hoffman J."/>
            <person name="Till S."/>
            <person name="Granat S."/>
            <person name="Shohdy N."/>
            <person name="Hasegawa A."/>
            <person name="Hameed A."/>
            <person name="Lodhi M."/>
            <person name="Johnson A."/>
            <person name="Chen E."/>
            <person name="Marra M.A."/>
            <person name="Martienssen R."/>
            <person name="McCombie W.R."/>
        </authorList>
    </citation>
    <scope>NUCLEOTIDE SEQUENCE [LARGE SCALE GENOMIC DNA]</scope>
    <source>
        <strain>cv. Columbia</strain>
    </source>
</reference>
<reference key="5">
    <citation type="journal article" date="2017" name="Plant J.">
        <title>Araport11: a complete reannotation of the Arabidopsis thaliana reference genome.</title>
        <authorList>
            <person name="Cheng C.Y."/>
            <person name="Krishnakumar V."/>
            <person name="Chan A.P."/>
            <person name="Thibaud-Nissen F."/>
            <person name="Schobel S."/>
            <person name="Town C.D."/>
        </authorList>
    </citation>
    <scope>GENOME REANNOTATION</scope>
    <source>
        <strain>cv. Columbia</strain>
    </source>
</reference>
<comment type="function">
    <text evidence="4">Involved in cadmium/zinc transport.</text>
</comment>
<comment type="catalytic activity">
    <reaction>
        <text>Zn(2+)(in) + ATP + H2O = Zn(2+)(out) + ADP + phosphate + H(+)</text>
        <dbReference type="Rhea" id="RHEA:20621"/>
        <dbReference type="ChEBI" id="CHEBI:15377"/>
        <dbReference type="ChEBI" id="CHEBI:15378"/>
        <dbReference type="ChEBI" id="CHEBI:29105"/>
        <dbReference type="ChEBI" id="CHEBI:30616"/>
        <dbReference type="ChEBI" id="CHEBI:43474"/>
        <dbReference type="ChEBI" id="CHEBI:456216"/>
        <dbReference type="EC" id="7.2.2.12"/>
    </reaction>
</comment>
<comment type="catalytic activity">
    <reaction>
        <text>Cd(2+)(in) + ATP + H2O = Cd(2+)(out) + ADP + phosphate + H(+)</text>
        <dbReference type="Rhea" id="RHEA:12132"/>
        <dbReference type="ChEBI" id="CHEBI:15377"/>
        <dbReference type="ChEBI" id="CHEBI:15378"/>
        <dbReference type="ChEBI" id="CHEBI:30616"/>
        <dbReference type="ChEBI" id="CHEBI:43474"/>
        <dbReference type="ChEBI" id="CHEBI:48775"/>
        <dbReference type="ChEBI" id="CHEBI:456216"/>
        <dbReference type="EC" id="7.2.2.21"/>
    </reaction>
</comment>
<comment type="subcellular location">
    <subcellularLocation>
        <location evidence="4">Plastid</location>
        <location evidence="4">Chloroplast inner membrane</location>
        <topology evidence="4">Multi-pass membrane protein</topology>
    </subcellularLocation>
</comment>
<comment type="similarity">
    <text evidence="4">Belongs to the cation transport ATPase (P-type) (TC 3.A.3) family. Type IB subfamily.</text>
</comment>
<sequence>MEPATLTRSSSLTRFPYRRGLSTLRLARVNSFSILPPKTLLRQKPLRISASLNLPPRSIRLRAVEDHHHDHHHDDEQDHHNHHHHHHQHGCCSVELKAESKPQKMLFGFAKAIGWVRLANYLREHLHLCCSAAAMFLAAAVCPYLAPEPYIKSLQNAFMIVGFPLVGVSASLDALMDIAGGKVNIHVLMALAAFASVFMGNALEGGLLLAMFNLAHIAEEFFTSRSMVDVKELKESNPDSALLIEVHNGNVPNISDLSYKSVPVHSVEVGSYVLVGTGEIVPVDCEVYQGSATITIEHLTGEVKPLEAKAGDRVPGGARNLDGRMIVKATKAWNDSTLNKIVQLTEEAHSNKPKLQRWLDEFGENYSKVVVVLSLAIAFLGPFLFKWPFLSTAACRGSVYRALGLMVAASPCALAVAPLAYATAISSCARKGILLKGAQVLDALASCHTIAFDKTGTLTTGGLTCKAIEPIYGHQGGTNSSVITCCIPNCEKEALAVAAAMEKGTTHPIGRAVVDHSVGKDLPSIFVESFEYFPGRGLTATVNGVKTVAEESRLRKASLGSIEFITSLFKSEDESKQIKDAVNASSYGKDFVHAALSVDQKVTLIHLEDQPRPGVSGVIAELKSWARLRVMMLTGDHDSSAWRVANAVGITEVYCNLKPEDKLNHVKNIAREAGGGLIMVGEGINDAPALAAATVGIVLAQRASATAIAVADILLLRDNITGVPFCVAKSRQTTSLVKQNVALALTSIFLAALPSVLGFVPLWLTVLLHEGGTLLVCLNSVRGLNDPSWSWKQDIVHLINKLRSQEPTSSSSNSLSSAH</sequence>
<name>HMA1_ARATH</name>